<protein>
    <recommendedName>
        <fullName evidence="1">ATP phosphoribosyltransferase</fullName>
        <shortName evidence="1">ATP-PRT</shortName>
        <shortName evidence="1">ATP-PRTase</shortName>
        <ecNumber evidence="1">2.4.2.17</ecNumber>
    </recommendedName>
</protein>
<comment type="function">
    <text evidence="1">Catalyzes the condensation of ATP and 5-phosphoribose 1-diphosphate to form N'-(5'-phosphoribosyl)-ATP (PR-ATP). Has a crucial role in the pathway because the rate of histidine biosynthesis seems to be controlled primarily by regulation of HisG enzymatic activity.</text>
</comment>
<comment type="catalytic activity">
    <reaction evidence="1">
        <text>1-(5-phospho-beta-D-ribosyl)-ATP + diphosphate = 5-phospho-alpha-D-ribose 1-diphosphate + ATP</text>
        <dbReference type="Rhea" id="RHEA:18473"/>
        <dbReference type="ChEBI" id="CHEBI:30616"/>
        <dbReference type="ChEBI" id="CHEBI:33019"/>
        <dbReference type="ChEBI" id="CHEBI:58017"/>
        <dbReference type="ChEBI" id="CHEBI:73183"/>
        <dbReference type="EC" id="2.4.2.17"/>
    </reaction>
</comment>
<comment type="cofactor">
    <cofactor evidence="1">
        <name>Mg(2+)</name>
        <dbReference type="ChEBI" id="CHEBI:18420"/>
    </cofactor>
</comment>
<comment type="activity regulation">
    <text evidence="1">Feedback inhibited by histidine.</text>
</comment>
<comment type="pathway">
    <text evidence="1">Amino-acid biosynthesis; L-histidine biosynthesis; L-histidine from 5-phospho-alpha-D-ribose 1-diphosphate: step 1/9.</text>
</comment>
<comment type="subcellular location">
    <subcellularLocation>
        <location evidence="1">Cytoplasm</location>
    </subcellularLocation>
</comment>
<comment type="similarity">
    <text evidence="1">Belongs to the ATP phosphoribosyltransferase family. Long subfamily.</text>
</comment>
<accession>B9KEH8</accession>
<evidence type="ECO:0000255" key="1">
    <source>
        <dbReference type="HAMAP-Rule" id="MF_00079"/>
    </source>
</evidence>
<organism>
    <name type="scientific">Campylobacter lari (strain RM2100 / D67 / ATCC BAA-1060)</name>
    <dbReference type="NCBI Taxonomy" id="306263"/>
    <lineage>
        <taxon>Bacteria</taxon>
        <taxon>Pseudomonadati</taxon>
        <taxon>Campylobacterota</taxon>
        <taxon>Epsilonproteobacteria</taxon>
        <taxon>Campylobacterales</taxon>
        <taxon>Campylobacteraceae</taxon>
        <taxon>Campylobacter</taxon>
    </lineage>
</organism>
<dbReference type="EC" id="2.4.2.17" evidence="1"/>
<dbReference type="EMBL" id="CP000932">
    <property type="protein sequence ID" value="ACM63463.1"/>
    <property type="molecule type" value="Genomic_DNA"/>
</dbReference>
<dbReference type="RefSeq" id="WP_012660848.1">
    <property type="nucleotide sequence ID" value="NC_012039.1"/>
</dbReference>
<dbReference type="SMR" id="B9KEH8"/>
<dbReference type="STRING" id="306263.Cla_0097"/>
<dbReference type="KEGG" id="cla:CLA_0097"/>
<dbReference type="PATRIC" id="fig|306263.5.peg.97"/>
<dbReference type="eggNOG" id="COG0040">
    <property type="taxonomic scope" value="Bacteria"/>
</dbReference>
<dbReference type="HOGENOM" id="CLU_038115_1_0_7"/>
<dbReference type="UniPathway" id="UPA00031">
    <property type="reaction ID" value="UER00006"/>
</dbReference>
<dbReference type="Proteomes" id="UP000007727">
    <property type="component" value="Chromosome"/>
</dbReference>
<dbReference type="GO" id="GO:0005737">
    <property type="term" value="C:cytoplasm"/>
    <property type="evidence" value="ECO:0007669"/>
    <property type="project" value="UniProtKB-SubCell"/>
</dbReference>
<dbReference type="GO" id="GO:0005524">
    <property type="term" value="F:ATP binding"/>
    <property type="evidence" value="ECO:0007669"/>
    <property type="project" value="UniProtKB-KW"/>
</dbReference>
<dbReference type="GO" id="GO:0003879">
    <property type="term" value="F:ATP phosphoribosyltransferase activity"/>
    <property type="evidence" value="ECO:0007669"/>
    <property type="project" value="UniProtKB-UniRule"/>
</dbReference>
<dbReference type="GO" id="GO:0000287">
    <property type="term" value="F:magnesium ion binding"/>
    <property type="evidence" value="ECO:0007669"/>
    <property type="project" value="UniProtKB-UniRule"/>
</dbReference>
<dbReference type="GO" id="GO:0000105">
    <property type="term" value="P:L-histidine biosynthetic process"/>
    <property type="evidence" value="ECO:0007669"/>
    <property type="project" value="UniProtKB-UniRule"/>
</dbReference>
<dbReference type="FunFam" id="3.30.70.120:FF:000002">
    <property type="entry name" value="ATP phosphoribosyltransferase"/>
    <property type="match status" value="1"/>
</dbReference>
<dbReference type="FunFam" id="3.40.190.10:FF:000008">
    <property type="entry name" value="ATP phosphoribosyltransferase"/>
    <property type="match status" value="1"/>
</dbReference>
<dbReference type="Gene3D" id="3.30.70.120">
    <property type="match status" value="1"/>
</dbReference>
<dbReference type="Gene3D" id="3.40.190.10">
    <property type="entry name" value="Periplasmic binding protein-like II"/>
    <property type="match status" value="2"/>
</dbReference>
<dbReference type="HAMAP" id="MF_00079">
    <property type="entry name" value="HisG_Long"/>
    <property type="match status" value="1"/>
</dbReference>
<dbReference type="InterPro" id="IPR020621">
    <property type="entry name" value="ATP-PRT_HisG_long"/>
</dbReference>
<dbReference type="InterPro" id="IPR013820">
    <property type="entry name" value="ATP_PRibTrfase_cat"/>
</dbReference>
<dbReference type="InterPro" id="IPR018198">
    <property type="entry name" value="ATP_PRibTrfase_CS"/>
</dbReference>
<dbReference type="InterPro" id="IPR001348">
    <property type="entry name" value="ATP_PRibTrfase_HisG"/>
</dbReference>
<dbReference type="InterPro" id="IPR013115">
    <property type="entry name" value="HisG_C"/>
</dbReference>
<dbReference type="InterPro" id="IPR011322">
    <property type="entry name" value="N-reg_PII-like_a/b"/>
</dbReference>
<dbReference type="InterPro" id="IPR015867">
    <property type="entry name" value="N-reg_PII/ATP_PRibTrfase_C"/>
</dbReference>
<dbReference type="NCBIfam" id="TIGR00070">
    <property type="entry name" value="hisG"/>
    <property type="match status" value="1"/>
</dbReference>
<dbReference type="NCBIfam" id="TIGR03455">
    <property type="entry name" value="HisG_C-term"/>
    <property type="match status" value="1"/>
</dbReference>
<dbReference type="PANTHER" id="PTHR21403:SF8">
    <property type="entry name" value="ATP PHOSPHORIBOSYLTRANSFERASE"/>
    <property type="match status" value="1"/>
</dbReference>
<dbReference type="PANTHER" id="PTHR21403">
    <property type="entry name" value="ATP PHOSPHORIBOSYLTRANSFERASE ATP-PRTASE"/>
    <property type="match status" value="1"/>
</dbReference>
<dbReference type="Pfam" id="PF01634">
    <property type="entry name" value="HisG"/>
    <property type="match status" value="1"/>
</dbReference>
<dbReference type="Pfam" id="PF08029">
    <property type="entry name" value="HisG_C"/>
    <property type="match status" value="1"/>
</dbReference>
<dbReference type="SUPFAM" id="SSF54913">
    <property type="entry name" value="GlnB-like"/>
    <property type="match status" value="1"/>
</dbReference>
<dbReference type="SUPFAM" id="SSF53850">
    <property type="entry name" value="Periplasmic binding protein-like II"/>
    <property type="match status" value="1"/>
</dbReference>
<dbReference type="PROSITE" id="PS01316">
    <property type="entry name" value="ATP_P_PHORIBOSYLTR"/>
    <property type="match status" value="1"/>
</dbReference>
<feature type="chain" id="PRO_1000118247" description="ATP phosphoribosyltransferase">
    <location>
        <begin position="1"/>
        <end position="299"/>
    </location>
</feature>
<proteinExistence type="inferred from homology"/>
<keyword id="KW-0028">Amino-acid biosynthesis</keyword>
<keyword id="KW-0067">ATP-binding</keyword>
<keyword id="KW-0963">Cytoplasm</keyword>
<keyword id="KW-0328">Glycosyltransferase</keyword>
<keyword id="KW-0368">Histidine biosynthesis</keyword>
<keyword id="KW-0460">Magnesium</keyword>
<keyword id="KW-0479">Metal-binding</keyword>
<keyword id="KW-0547">Nucleotide-binding</keyword>
<keyword id="KW-1185">Reference proteome</keyword>
<keyword id="KW-0808">Transferase</keyword>
<sequence length="299" mass="33370">MQENSRLRIAIQKSGRLSKDSIALLESIGVKLRIHDQSLIAFSTNLPIDLLRVRDDDIPGLIFDGVVDLGIVGENVLEENELERKSKNENADFIMLKKLDFGGCRLSLALPENSEYKGVESFKNLRIATSYPQLLKRFMEENNIPYKTCMLTGSVEVAPSANLADGICDLVSSGATLKANGLKEVMVIYKSKACIIQRKESLVSHKQELIDKLLIRINGVMQARESKYIMLHAPIEKLEKITALLPGVEKPTILPLENDKARVALHMVSQENLFWETMEALKKEGASAILVLPIEKMLS</sequence>
<name>HIS1_CAMLR</name>
<gene>
    <name evidence="1" type="primary">hisG</name>
    <name type="ordered locus">Cla_0097</name>
</gene>
<reference key="1">
    <citation type="journal article" date="2008" name="Foodborne Pathog. Dis.">
        <title>The complete genome sequence and analysis of the human pathogen Campylobacter lari.</title>
        <authorList>
            <person name="Miller W.G."/>
            <person name="Wang G."/>
            <person name="Binnewies T.T."/>
            <person name="Parker C.T."/>
        </authorList>
    </citation>
    <scope>NUCLEOTIDE SEQUENCE [LARGE SCALE GENOMIC DNA]</scope>
    <source>
        <strain>RM2100 / D67 / ATCC BAA-1060</strain>
    </source>
</reference>